<feature type="chain" id="PRO_1000026444" description="Xylose isomerase">
    <location>
        <begin position="1"/>
        <end position="449"/>
    </location>
</feature>
<feature type="active site" evidence="1">
    <location>
        <position position="103"/>
    </location>
</feature>
<feature type="active site" evidence="1">
    <location>
        <position position="106"/>
    </location>
</feature>
<feature type="binding site" evidence="1">
    <location>
        <position position="234"/>
    </location>
    <ligand>
        <name>Mg(2+)</name>
        <dbReference type="ChEBI" id="CHEBI:18420"/>
        <label>1</label>
    </ligand>
</feature>
<feature type="binding site" evidence="1">
    <location>
        <position position="270"/>
    </location>
    <ligand>
        <name>Mg(2+)</name>
        <dbReference type="ChEBI" id="CHEBI:18420"/>
        <label>1</label>
    </ligand>
</feature>
<feature type="binding site" evidence="1">
    <location>
        <position position="270"/>
    </location>
    <ligand>
        <name>Mg(2+)</name>
        <dbReference type="ChEBI" id="CHEBI:18420"/>
        <label>2</label>
    </ligand>
</feature>
<feature type="binding site" evidence="1">
    <location>
        <position position="273"/>
    </location>
    <ligand>
        <name>Mg(2+)</name>
        <dbReference type="ChEBI" id="CHEBI:18420"/>
        <label>2</label>
    </ligand>
</feature>
<feature type="binding site" evidence="1">
    <location>
        <position position="298"/>
    </location>
    <ligand>
        <name>Mg(2+)</name>
        <dbReference type="ChEBI" id="CHEBI:18420"/>
        <label>1</label>
    </ligand>
</feature>
<feature type="binding site" evidence="1">
    <location>
        <position position="309"/>
    </location>
    <ligand>
        <name>Mg(2+)</name>
        <dbReference type="ChEBI" id="CHEBI:18420"/>
        <label>2</label>
    </ligand>
</feature>
<feature type="binding site" evidence="1">
    <location>
        <position position="311"/>
    </location>
    <ligand>
        <name>Mg(2+)</name>
        <dbReference type="ChEBI" id="CHEBI:18420"/>
        <label>2</label>
    </ligand>
</feature>
<feature type="binding site" evidence="1">
    <location>
        <position position="342"/>
    </location>
    <ligand>
        <name>Mg(2+)</name>
        <dbReference type="ChEBI" id="CHEBI:18420"/>
        <label>1</label>
    </ligand>
</feature>
<sequence>MTEEYWKGVDKIQYVGHQDKKSGLGFQYYNPEEEIMGKKMKDWLRFAVAYWHTFDQRLVDPFGDGTAQRPYDKYTDPMDLALAKVDAAFEFYQKLGVDYLCFHDRDLAPEGDTLRETNANLDKVVDKIVEYQKTSGMKVLWNTSNMFTNPRFVEGAATSPYADVFAYSAAQLKHSLEIGKRVGSENYVFWGGREGYESLWNTNMKQEQEHAAKIFHMAKDYANEIGFDAQMLLEPKPKEPTTHQYDFDAATTIAFMKEYDLDKDFKLNLEGNHANLAGHTYQHEIRVAREAGLLGSLDANQGDKLIGWDIDEYPSNLYETTAAMYEVVENGSIGPRGGLNFDAKPRRSSFAPEDLFLGHIVGMDSFAAGLRVAAAMKQDGFLDSLKADRYSSYKSGVGADIESGKADLKSLEAYAIDKPQSELIAATHSDHLEEIKDTINHYIIDTLSK</sequence>
<keyword id="KW-0119">Carbohydrate metabolism</keyword>
<keyword id="KW-0963">Cytoplasm</keyword>
<keyword id="KW-0413">Isomerase</keyword>
<keyword id="KW-0460">Magnesium</keyword>
<keyword id="KW-0479">Metal-binding</keyword>
<keyword id="KW-1185">Reference proteome</keyword>
<keyword id="KW-0859">Xylose metabolism</keyword>
<proteinExistence type="inferred from homology"/>
<protein>
    <recommendedName>
        <fullName evidence="1">Xylose isomerase</fullName>
        <ecNumber evidence="1">5.3.1.5</ecNumber>
    </recommendedName>
</protein>
<reference key="1">
    <citation type="journal article" date="2006" name="Proc. Natl. Acad. Sci. U.S.A.">
        <title>Comparative genomics of the lactic acid bacteria.</title>
        <authorList>
            <person name="Makarova K.S."/>
            <person name="Slesarev A."/>
            <person name="Wolf Y.I."/>
            <person name="Sorokin A."/>
            <person name="Mirkin B."/>
            <person name="Koonin E.V."/>
            <person name="Pavlov A."/>
            <person name="Pavlova N."/>
            <person name="Karamychev V."/>
            <person name="Polouchine N."/>
            <person name="Shakhova V."/>
            <person name="Grigoriev I."/>
            <person name="Lou Y."/>
            <person name="Rohksar D."/>
            <person name="Lucas S."/>
            <person name="Huang K."/>
            <person name="Goodstein D.M."/>
            <person name="Hawkins T."/>
            <person name="Plengvidhya V."/>
            <person name="Welker D."/>
            <person name="Hughes J."/>
            <person name="Goh Y."/>
            <person name="Benson A."/>
            <person name="Baldwin K."/>
            <person name="Lee J.-H."/>
            <person name="Diaz-Muniz I."/>
            <person name="Dosti B."/>
            <person name="Smeianov V."/>
            <person name="Wechter W."/>
            <person name="Barabote R."/>
            <person name="Lorca G."/>
            <person name="Altermann E."/>
            <person name="Barrangou R."/>
            <person name="Ganesan B."/>
            <person name="Xie Y."/>
            <person name="Rawsthorne H."/>
            <person name="Tamir D."/>
            <person name="Parker C."/>
            <person name="Breidt F."/>
            <person name="Broadbent J.R."/>
            <person name="Hutkins R."/>
            <person name="O'Sullivan D."/>
            <person name="Steele J."/>
            <person name="Unlu G."/>
            <person name="Saier M.H. Jr."/>
            <person name="Klaenhammer T."/>
            <person name="Richardson P."/>
            <person name="Kozyavkin S."/>
            <person name="Weimer B.C."/>
            <person name="Mills D.A."/>
        </authorList>
    </citation>
    <scope>NUCLEOTIDE SEQUENCE [LARGE SCALE GENOMIC DNA]</scope>
    <source>
        <strain>ATCC 367 / BCRC 12310 / CIP 105137 / JCM 1170 / LMG 11437 / NCIMB 947 / NCTC 947</strain>
    </source>
</reference>
<accession>Q03TX3</accession>
<comment type="catalytic activity">
    <reaction evidence="1">
        <text>alpha-D-xylose = alpha-D-xylulofuranose</text>
        <dbReference type="Rhea" id="RHEA:22816"/>
        <dbReference type="ChEBI" id="CHEBI:28518"/>
        <dbReference type="ChEBI" id="CHEBI:188998"/>
        <dbReference type="EC" id="5.3.1.5"/>
    </reaction>
</comment>
<comment type="cofactor">
    <cofactor evidence="1">
        <name>Mg(2+)</name>
        <dbReference type="ChEBI" id="CHEBI:18420"/>
    </cofactor>
    <text evidence="1">Binds 2 magnesium ions per subunit.</text>
</comment>
<comment type="subunit">
    <text evidence="1">Homotetramer.</text>
</comment>
<comment type="subcellular location">
    <subcellularLocation>
        <location evidence="1">Cytoplasm</location>
    </subcellularLocation>
</comment>
<comment type="similarity">
    <text evidence="1">Belongs to the xylose isomerase family.</text>
</comment>
<gene>
    <name evidence="1" type="primary">xylA</name>
    <name type="ordered locus">LVIS_0183</name>
</gene>
<evidence type="ECO:0000255" key="1">
    <source>
        <dbReference type="HAMAP-Rule" id="MF_00455"/>
    </source>
</evidence>
<name>XYLA_LEVBA</name>
<dbReference type="EC" id="5.3.1.5" evidence="1"/>
<dbReference type="EMBL" id="CP000416">
    <property type="protein sequence ID" value="ABJ63349.1"/>
    <property type="molecule type" value="Genomic_DNA"/>
</dbReference>
<dbReference type="RefSeq" id="WP_011666984.1">
    <property type="nucleotide sequence ID" value="NC_008497.1"/>
</dbReference>
<dbReference type="SMR" id="Q03TX3"/>
<dbReference type="STRING" id="387344.LVIS_0183"/>
<dbReference type="KEGG" id="lbr:LVIS_0183"/>
<dbReference type="eggNOG" id="COG2115">
    <property type="taxonomic scope" value="Bacteria"/>
</dbReference>
<dbReference type="HOGENOM" id="CLU_037261_1_0_9"/>
<dbReference type="Proteomes" id="UP000001652">
    <property type="component" value="Chromosome"/>
</dbReference>
<dbReference type="GO" id="GO:0005737">
    <property type="term" value="C:cytoplasm"/>
    <property type="evidence" value="ECO:0007669"/>
    <property type="project" value="UniProtKB-SubCell"/>
</dbReference>
<dbReference type="GO" id="GO:0000287">
    <property type="term" value="F:magnesium ion binding"/>
    <property type="evidence" value="ECO:0007669"/>
    <property type="project" value="UniProtKB-UniRule"/>
</dbReference>
<dbReference type="GO" id="GO:0009045">
    <property type="term" value="F:xylose isomerase activity"/>
    <property type="evidence" value="ECO:0007669"/>
    <property type="project" value="UniProtKB-UniRule"/>
</dbReference>
<dbReference type="GO" id="GO:0042732">
    <property type="term" value="P:D-xylose metabolic process"/>
    <property type="evidence" value="ECO:0007669"/>
    <property type="project" value="UniProtKB-UniRule"/>
</dbReference>
<dbReference type="Gene3D" id="3.20.20.150">
    <property type="entry name" value="Divalent-metal-dependent TIM barrel enzymes"/>
    <property type="match status" value="1"/>
</dbReference>
<dbReference type="HAMAP" id="MF_00455">
    <property type="entry name" value="Xylose_isom_A"/>
    <property type="match status" value="1"/>
</dbReference>
<dbReference type="InterPro" id="IPR036237">
    <property type="entry name" value="Xyl_isomerase-like_sf"/>
</dbReference>
<dbReference type="InterPro" id="IPR013452">
    <property type="entry name" value="Xylose_isom_bac"/>
</dbReference>
<dbReference type="InterPro" id="IPR001998">
    <property type="entry name" value="Xylose_isomerase"/>
</dbReference>
<dbReference type="NCBIfam" id="NF003998">
    <property type="entry name" value="PRK05474.1"/>
    <property type="match status" value="1"/>
</dbReference>
<dbReference type="NCBIfam" id="TIGR02630">
    <property type="entry name" value="xylose_isom_A"/>
    <property type="match status" value="1"/>
</dbReference>
<dbReference type="PANTHER" id="PTHR48408">
    <property type="match status" value="1"/>
</dbReference>
<dbReference type="PANTHER" id="PTHR48408:SF1">
    <property type="entry name" value="XYLOSE ISOMERASE"/>
    <property type="match status" value="1"/>
</dbReference>
<dbReference type="PRINTS" id="PR00688">
    <property type="entry name" value="XYLOSISMRASE"/>
</dbReference>
<dbReference type="SUPFAM" id="SSF51658">
    <property type="entry name" value="Xylose isomerase-like"/>
    <property type="match status" value="1"/>
</dbReference>
<dbReference type="PROSITE" id="PS51415">
    <property type="entry name" value="XYLOSE_ISOMERASE"/>
    <property type="match status" value="1"/>
</dbReference>
<organism>
    <name type="scientific">Levilactobacillus brevis (strain ATCC 367 / BCRC 12310 / CIP 105137 / JCM 1170 / LMG 11437 / NCIMB 947 / NCTC 947)</name>
    <name type="common">Lactobacillus brevis</name>
    <dbReference type="NCBI Taxonomy" id="387344"/>
    <lineage>
        <taxon>Bacteria</taxon>
        <taxon>Bacillati</taxon>
        <taxon>Bacillota</taxon>
        <taxon>Bacilli</taxon>
        <taxon>Lactobacillales</taxon>
        <taxon>Lactobacillaceae</taxon>
        <taxon>Levilactobacillus</taxon>
    </lineage>
</organism>